<evidence type="ECO:0000255" key="1"/>
<evidence type="ECO:0000255" key="2">
    <source>
        <dbReference type="PROSITE-ProRule" id="PRU00490"/>
    </source>
</evidence>
<evidence type="ECO:0000255" key="3">
    <source>
        <dbReference type="PROSITE-ProRule" id="PRU00541"/>
    </source>
</evidence>
<evidence type="ECO:0000255" key="4">
    <source>
        <dbReference type="PROSITE-ProRule" id="PRU00542"/>
    </source>
</evidence>
<evidence type="ECO:0000256" key="5">
    <source>
        <dbReference type="SAM" id="MobiDB-lite"/>
    </source>
</evidence>
<evidence type="ECO:0000269" key="6">
    <source>
    </source>
</evidence>
<evidence type="ECO:0000269" key="7">
    <source>
    </source>
</evidence>
<evidence type="ECO:0000269" key="8">
    <source>
    </source>
</evidence>
<evidence type="ECO:0000269" key="9">
    <source>
    </source>
</evidence>
<evidence type="ECO:0000269" key="10">
    <source>
    </source>
</evidence>
<evidence type="ECO:0000269" key="11">
    <source>
    </source>
</evidence>
<evidence type="ECO:0000269" key="12">
    <source>
    </source>
</evidence>
<evidence type="ECO:0000269" key="13">
    <source>
    </source>
</evidence>
<evidence type="ECO:0000269" key="14">
    <source>
    </source>
</evidence>
<evidence type="ECO:0000269" key="15">
    <source>
    </source>
</evidence>
<evidence type="ECO:0000269" key="16">
    <source>
    </source>
</evidence>
<evidence type="ECO:0000269" key="17">
    <source>
    </source>
</evidence>
<evidence type="ECO:0000269" key="18">
    <source>
    </source>
</evidence>
<evidence type="ECO:0000269" key="19">
    <source>
    </source>
</evidence>
<evidence type="ECO:0000303" key="20">
    <source>
    </source>
</evidence>
<evidence type="ECO:0000303" key="21">
    <source>
    </source>
</evidence>
<evidence type="ECO:0000303" key="22">
    <source>
    </source>
</evidence>
<evidence type="ECO:0000303" key="23">
    <source>
    </source>
</evidence>
<evidence type="ECO:0000305" key="24"/>
<evidence type="ECO:0000312" key="25">
    <source>
        <dbReference type="HGNC" id="HGNC:1916"/>
    </source>
</evidence>
<evidence type="ECO:0007744" key="26">
    <source>
        <dbReference type="PDB" id="6ZHX"/>
    </source>
</evidence>
<evidence type="ECO:0007744" key="27">
    <source>
        <dbReference type="PDB" id="6ZHY"/>
    </source>
</evidence>
<evidence type="ECO:0007744" key="28">
    <source>
        <dbReference type="PDB" id="7ENN"/>
    </source>
</evidence>
<evidence type="ECO:0007744" key="29">
    <source>
        <dbReference type="PDB" id="7EPU"/>
    </source>
</evidence>
<evidence type="ECO:0007744" key="30">
    <source>
        <dbReference type="PDB" id="7OTQ"/>
    </source>
</evidence>
<evidence type="ECO:0007744" key="31">
    <source>
    </source>
</evidence>
<evidence type="ECO:0007744" key="32">
    <source>
    </source>
</evidence>
<evidence type="ECO:0007744" key="33">
    <source>
    </source>
</evidence>
<evidence type="ECO:0007744" key="34">
    <source>
    </source>
</evidence>
<evidence type="ECO:0007744" key="35">
    <source>
    </source>
</evidence>
<evidence type="ECO:0007829" key="36">
    <source>
        <dbReference type="PDB" id="7ENN"/>
    </source>
</evidence>
<evidence type="ECO:0007829" key="37">
    <source>
        <dbReference type="PDB" id="7EPU"/>
    </source>
</evidence>
<evidence type="ECO:0007829" key="38">
    <source>
        <dbReference type="PDB" id="8B0A"/>
    </source>
</evidence>
<proteinExistence type="evidence at protein level"/>
<organism>
    <name type="scientific">Homo sapiens</name>
    <name type="common">Human</name>
    <dbReference type="NCBI Taxonomy" id="9606"/>
    <lineage>
        <taxon>Eukaryota</taxon>
        <taxon>Metazoa</taxon>
        <taxon>Chordata</taxon>
        <taxon>Craniata</taxon>
        <taxon>Vertebrata</taxon>
        <taxon>Euteleostomi</taxon>
        <taxon>Mammalia</taxon>
        <taxon>Eutheria</taxon>
        <taxon>Euarchontoglires</taxon>
        <taxon>Primates</taxon>
        <taxon>Haplorrhini</taxon>
        <taxon>Catarrhini</taxon>
        <taxon>Hominidae</taxon>
        <taxon>Homo</taxon>
    </lineage>
</organism>
<sequence length="897" mass="101000">MERAGATSRGGQAPGFLLRLHTEGRAEAARVQEQDLRQWGLTGIHLRSYQLEGVNWLAQRFHCQNGCILGDEMGLGKTCQTIALFIYLAGRLNDEGPFLILCPLSVLSNWKEEMQRFAPGLSCVTYAGDKEERACLQQDLKQESRFHVLLTTYEICLKDASFLKSFPWSVLVVDEAHRLKNQSSLLHKTLSEFSVVFSLLLTGTPIQNSLQELYSLLSFVEPDLFSKEEVGDFIQRYQDIEKESESASELHKLLQPFLLRRVKAEVATELPKKTEVVIYHGMSALQKKYYKAILMKDLDAFENETAKKVKLQNILSQLRKCVDHPYLFDGVEPEPFEVGDHLTEASGKLHLLDKLLAFLYSGGHRVLLFSQMTQMLDILQDYMDYRGYSYERVDGSVRGEERHLAIKNFGQQPIFVFLLSTRAGGVGMNLTAADTVIFVDSDFNPQNDLQAAARAHRIGQNKSVKVIRLIGRDTVEEIVYRKAASKLQLTNMIIEGGHFTLGAQKPAADADLQLSEILKFGLDKLLASEGSTMDEIDLESILGETKDGQWVSDALPAAEGGSRDQEEGKNHMYLFEGKDYSKEPSKEDRKSFEQLVNLQKTLLEKASQEGRSLRNKGSVLIPGLVEGSTKRKRVLSPEELEDRQKKRQEAAAKRRRLIEEKKRQKEEAEHKKKMAWWESNNYQSFCLPSEESEPEDLENGEESSAELDYQDPDATSLKYVSGDVTHPQAGAEDALIVHCVDDSGHWGRGGLFTALEKRSAEPRKIYELAGKMKDLSLGGVLLFPVDDKESRNKGQDLLALIVAQHRDRSNVLSGIKMAALEEGLKKIFLAAKKKKASVHLPRIGHATKGFNWYGTERLIRKHLAARGIPTYIYYFPRSKSAVLHSQSSSSSSRQLVP</sequence>
<comment type="function">
    <text evidence="11 13 14 15 16 17 18 19">ATP-dependent chromatin remodeler that mediates chromatin-remodeling following DNA damage (PubMed:19661379, PubMed:29220652, PubMed:29220653, PubMed:33357431, PubMed:34210977, PubMed:34486521, PubMed:34874266). Recruited to DNA damage sites through interaction with poly-ADP-ribose: specifically recognizes and binds histones that are poly-ADP-ribosylated on serine residues in response to DNA damage (PubMed:19661379, PubMed:29220652, PubMed:29220653, PubMed:34486521, PubMed:34874266). Poly-ADP-ribose-binding activates the ATP-dependent chromatin remodeler activity, thereby regulating chromatin during DNA repair (PubMed:19661379, PubMed:29220652, PubMed:29220653, PubMed:34486521, PubMed:34874266). Catalyzes nucleosome sliding away from DNA breaks in an ATP-dependent manner (PubMed:19661379, PubMed:29220652, PubMed:29220653). Chromatin remodeling activity promotes PARP2 removal from chromatin (PubMed:33275888).</text>
</comment>
<comment type="catalytic activity">
    <reaction evidence="13 14 18">
        <text>ATP + H2O = ADP + phosphate + H(+)</text>
        <dbReference type="Rhea" id="RHEA:13065"/>
        <dbReference type="ChEBI" id="CHEBI:15377"/>
        <dbReference type="ChEBI" id="CHEBI:15378"/>
        <dbReference type="ChEBI" id="CHEBI:30616"/>
        <dbReference type="ChEBI" id="CHEBI:43474"/>
        <dbReference type="ChEBI" id="CHEBI:456216"/>
    </reaction>
    <physiologicalReaction direction="left-to-right" evidence="13 14 18">
        <dbReference type="Rhea" id="RHEA:13066"/>
    </physiologicalReaction>
</comment>
<comment type="activity regulation">
    <text evidence="16 18 19">Adopts an inactive conformation in absence of DNA damage (PubMed:33357431, PubMed:34486521, PubMed:34874266). Binding to poly-ADP-ribosylated histones activates the ATP-dependent chromatin remodeler activity (PubMed:34486521, PubMed:34874266).</text>
</comment>
<comment type="subunit">
    <text evidence="11 12 14 16 17 18">Interacts with nucleosomes; interacts with the acidic patch of histones (PubMed:33357431, PubMed:34210977, PubMed:34486521). Interacts (via macro domain) with PARP1; interacts only when PARP1 is poly-ADP-ribosylated (PARylated) (PubMed:19661379, PubMed:29220653). Interacts with CIAO1 (PubMed:23891004).</text>
</comment>
<comment type="interaction">
    <interactant intactId="EBI-15797018">
        <id>Q86WJ1-1</id>
    </interactant>
    <interactant intactId="EBI-355676">
        <id>P09874</id>
        <label>PARP1</label>
    </interactant>
    <organismsDiffer>false</organismsDiffer>
    <experiments>3</experiments>
</comment>
<comment type="subcellular location">
    <subcellularLocation>
        <location evidence="11">Nucleus</location>
    </subcellularLocation>
    <subcellularLocation>
        <location evidence="11 13 18 19">Chromosome</location>
    </subcellularLocation>
    <text evidence="18 19">Localizes at sites of DNA damage; recruited by histones H2B and H3 poly-ADP-ribosylated on 'Ser-6' and 'Ser-10', respectively (H2BS6ADPr and H3S10ADPr) by PARP1 or PARP2.</text>
</comment>
<comment type="alternative products">
    <event type="alternative splicing"/>
    <isoform>
        <id>Q86WJ1-1</id>
        <name>1</name>
        <sequence type="displayed"/>
    </isoform>
    <isoform>
        <id>Q86WJ1-2</id>
        <name>2</name>
        <sequence type="described" ref="VSP_033342"/>
    </isoform>
    <isoform>
        <id>Q86WJ1-3</id>
        <name>3</name>
        <sequence type="described" ref="VSP_033341"/>
    </isoform>
    <isoform>
        <id>Q86WJ1-4</id>
        <name>4</name>
        <sequence type="described" ref="VSP_033340"/>
    </isoform>
    <isoform>
        <id>Q86WJ1-5</id>
        <name>5</name>
        <sequence type="described" ref="VSP_055675"/>
    </isoform>
</comment>
<comment type="tissue specificity">
    <text evidence="10">Frequently overexpressed in hepatomacellular carcinomas.</text>
</comment>
<comment type="domain">
    <text evidence="11 13 14 18 19">The macro domain mediates non-covalent poly(ADP-ribose)-binding and recruitment to DNA damage sites (PubMed:19661379, PubMed:29220652, PubMed:29220653). Mediates auto-inhibition of ATPase activity by interacting with the N-terminal ATPase module, encompassing the helicase ATP-binding domain and helicase C-terminal domain (PubMed:29220652, PubMed:29220653). Binding to poly-ADP-ribosylated histones upon DNA damage releases the auto-inhibition by the macro domain and trigger ATPase activity (PubMed:34486521, PubMed:34874266). Does not bind monomeric ADP-ribose and mono-ADP-ribose fails to release the auto-inhibition of the ATPase module by the macro domain (PubMed:29220653).</text>
</comment>
<comment type="similarity">
    <text evidence="24">Belongs to the SNF2/RAD54 helicase family.</text>
</comment>
<comment type="sequence caution" evidence="24">
    <conflict type="frameshift">
        <sequence resource="EMBL-CDS" id="BAB55248"/>
    </conflict>
</comment>
<feature type="chain" id="PRO_0000332141" description="Chromodomain-helicase-DNA-binding protein 1-like">
    <location>
        <begin position="1"/>
        <end position="897"/>
    </location>
</feature>
<feature type="domain" description="Helicase ATP-binding" evidence="3">
    <location>
        <begin position="58"/>
        <end position="223"/>
    </location>
</feature>
<feature type="domain" description="Helicase C-terminal" evidence="4">
    <location>
        <begin position="351"/>
        <end position="513"/>
    </location>
</feature>
<feature type="domain" description="Macro" evidence="2">
    <location>
        <begin position="704"/>
        <end position="897"/>
    </location>
</feature>
<feature type="region of interest" description="Regulatory linker segment (RLS)" evidence="16">
    <location>
        <begin position="601"/>
        <end position="635"/>
    </location>
</feature>
<feature type="region of interest" description="Required for ATPase activity" evidence="14">
    <location>
        <begin position="615"/>
        <end position="673"/>
    </location>
</feature>
<feature type="region of interest" description="Disordered" evidence="5">
    <location>
        <begin position="628"/>
        <end position="654"/>
    </location>
</feature>
<feature type="region of interest" description="Disordered" evidence="5">
    <location>
        <begin position="687"/>
        <end position="711"/>
    </location>
</feature>
<feature type="coiled-coil region" evidence="1">
    <location>
        <begin position="638"/>
        <end position="675"/>
    </location>
</feature>
<feature type="short sequence motif" description="DEAH box">
    <location>
        <begin position="174"/>
        <end position="177"/>
    </location>
</feature>
<feature type="compositionally biased region" description="Basic and acidic residues" evidence="5">
    <location>
        <begin position="642"/>
        <end position="654"/>
    </location>
</feature>
<feature type="compositionally biased region" description="Acidic residues" evidence="5">
    <location>
        <begin position="690"/>
        <end position="711"/>
    </location>
</feature>
<feature type="binding site" evidence="3">
    <location>
        <begin position="71"/>
        <end position="78"/>
    </location>
    <ligand>
        <name>ATP</name>
        <dbReference type="ChEBI" id="CHEBI:30616"/>
    </ligand>
</feature>
<feature type="modified residue" description="Omega-N-methylarginine" evidence="34">
    <location>
        <position position="9"/>
    </location>
</feature>
<feature type="modified residue" description="Phosphoserine" evidence="35">
    <location>
        <position position="540"/>
    </location>
</feature>
<feature type="modified residue" description="Phosphoserine" evidence="33">
    <location>
        <position position="607"/>
    </location>
</feature>
<feature type="modified residue" description="Phosphoserine" evidence="33">
    <location>
        <position position="618"/>
    </location>
</feature>
<feature type="modified residue" description="Phosphoserine" evidence="33">
    <location>
        <position position="628"/>
    </location>
</feature>
<feature type="modified residue" description="Phosphoserine" evidence="32 33">
    <location>
        <position position="636"/>
    </location>
</feature>
<feature type="modified residue" description="Phosphoserine" evidence="31">
    <location>
        <position position="891"/>
    </location>
</feature>
<feature type="splice variant" id="VSP_055675" description="In isoform 5." evidence="20">
    <location>
        <begin position="1"/>
        <end position="281"/>
    </location>
</feature>
<feature type="splice variant" id="VSP_033340" description="In isoform 4." evidence="20">
    <location>
        <begin position="1"/>
        <end position="113"/>
    </location>
</feature>
<feature type="splice variant" id="VSP_033341" description="In isoform 3." evidence="21">
    <location>
        <begin position="43"/>
        <end position="246"/>
    </location>
</feature>
<feature type="splice variant" id="VSP_033342" description="In isoform 2." evidence="21">
    <location>
        <begin position="331"/>
        <end position="424"/>
    </location>
</feature>
<feature type="sequence variant" id="VAR_042954" description="In dbSNP:rs11588753." evidence="7">
    <original>R</original>
    <variation>P</variation>
    <location>
        <position position="25"/>
    </location>
</feature>
<feature type="sequence variant" id="VAR_042955" description="In dbSNP:rs17356233." evidence="9">
    <original>H</original>
    <variation>Q</variation>
    <location>
        <position position="350"/>
    </location>
</feature>
<feature type="sequence variant" id="VAR_042956" description="In dbSNP:rs13374920.">
    <original>E</original>
    <variation>A</variation>
    <location>
        <position position="649"/>
    </location>
</feature>
<feature type="sequence variant" id="VAR_042957" description="In dbSNP:rs2275249." evidence="6 7">
    <original>S</original>
    <variation>C</variation>
    <location>
        <position position="743"/>
    </location>
</feature>
<feature type="sequence variant" id="VAR_086613" description="Found in patients with cancer; loss of auto-inhibition, leading to constitutive ATP-dependent chromatin remodeler activity; dbSNP:rs782473109." evidence="14">
    <original>R</original>
    <variation>H</variation>
    <location>
        <position position="842"/>
    </location>
</feature>
<feature type="sequence variant" id="VAR_086614" description="Found in patients with cancer; loss of auto-inhibition, leading to constitutive ATP-dependent chromatin remodeler activity; dbSNP:rs1553974573." evidence="17">
    <original>W</original>
    <variation>C</variation>
    <location>
        <position position="852"/>
    </location>
</feature>
<feature type="sequence variant" id="VAR_086615" description="Found in patients with cancer; loss of auto-inhibition, leading to constitutive ATP-dependent chromatin remodeler activity; dbSNP:rs1180954265." evidence="13 14">
    <original>R</original>
    <variation>Q</variation>
    <location>
        <position position="857"/>
    </location>
</feature>
<feature type="sequence variant" id="VAR_086616" description="Found in patients with cancer; loss of auto-inhibition, leading to constitutive ATP-dependent chromatin remodeler activity; dbSNP:rs139712616." evidence="13 14">
    <original>R</original>
    <variation>W</variation>
    <location>
        <position position="860"/>
    </location>
</feature>
<feature type="sequence variant" id="VAR_042958" description="In dbSNP:rs4950394." evidence="8">
    <original>S</original>
    <variation>A</variation>
    <location>
        <position position="885"/>
    </location>
</feature>
<feature type="mutagenesis site" description="Abolishes ATPase activity." evidence="11">
    <original>K</original>
    <variation>R</variation>
    <location>
        <position position="77"/>
    </location>
</feature>
<feature type="mutagenesis site" description="Abrogates chromatin remodeling activity. Prevents PARP2 removal from chromatin." evidence="14 15">
    <original>E</original>
    <variation>Q</variation>
    <location>
        <position position="175"/>
    </location>
</feature>
<feature type="mutagenesis site" description="Reduces interaction of the macro domain with the N-terminal ATPase module; when associated with E-398 and E-750." evidence="14">
    <original>KK</original>
    <variation>EE</variation>
    <location>
        <begin position="307"/>
        <end position="308"/>
    </location>
</feature>
<feature type="mutagenesis site" description="Reduces interaction of the macro domain with the N-terminal ATPase module; when associated with E-407; E-422 and E-750." evidence="14">
    <original>RK</original>
    <variation>EE</variation>
    <location>
        <begin position="319"/>
        <end position="320"/>
    </location>
</feature>
<feature type="mutagenesis site" description="Reduces interaction of the macro domain with the N-terminal ATPase module; when associated with E-750." evidence="14">
    <original>EPEPFE</original>
    <variation>APAPAA</variation>
    <location>
        <begin position="332"/>
        <end position="337"/>
    </location>
</feature>
<feature type="mutagenesis site" description="Decreased interaction with nucleosomes." evidence="17">
    <original>D</original>
    <variation>A</variation>
    <location>
        <position position="381"/>
    </location>
</feature>
<feature type="mutagenesis site" description="Reduces interaction of the macro domain with the N-terminal ATPase module; when associated with E-307, E-308 and E-750." evidence="14">
    <original>R</original>
    <variation>E</variation>
    <location>
        <position position="398"/>
    </location>
</feature>
<feature type="mutagenesis site" description="Reduces interaction of the macro domain with the N-terminal ATPase module; when associated with E-319, E-320, E-422 and E-750." evidence="14">
    <original>K</original>
    <variation>E</variation>
    <location>
        <position position="407"/>
    </location>
</feature>
<feature type="mutagenesis site" description="Does not reduce interaction of the macro domain with the N-terminal ATPase module; when associated with E-750." evidence="14">
    <original>S</original>
    <variation>A</variation>
    <location>
        <position position="420"/>
    </location>
</feature>
<feature type="mutagenesis site" description="Reduces interaction of the macro domain with the N-terminal ATPase module; when associated with E-319, E-320, E-407 and E-750." evidence="14">
    <original>R</original>
    <variation>E</variation>
    <location>
        <position position="422"/>
    </location>
</feature>
<feature type="mutagenesis site" description="Abolished ATP-dependent chromatin remodeler activity." evidence="17">
    <original>R</original>
    <variation>H</variation>
    <location>
        <position position="457"/>
    </location>
</feature>
<feature type="mutagenesis site" description="Strongly reduced interaction with the acidic patch of histones." evidence="16 18">
    <original>RS</original>
    <variation>AA</variation>
    <location>
        <begin position="611"/>
        <end position="612"/>
    </location>
</feature>
<feature type="mutagenesis site" description="Reduced interaction with histones." evidence="17">
    <original>R</original>
    <variation>E</variation>
    <location>
        <position position="611"/>
    </location>
</feature>
<feature type="mutagenesis site" description="Reduced interaction with histones." evidence="17">
    <original>R</original>
    <variation>E</variation>
    <location>
        <position position="614"/>
    </location>
</feature>
<feature type="mutagenesis site" description="Does not reduce interaction of the macro domain with the N-terminal ATPase module; when associated with E-750." evidence="14">
    <original>KRRR</original>
    <variation>AAAA</variation>
    <location>
        <begin position="653"/>
        <end position="656"/>
    </location>
</feature>
<feature type="mutagenesis site" description="Strongly reduces poly(ADP-ribose)-binding but not ATPase activity." evidence="11">
    <original>D</original>
    <variation>A</variation>
    <location>
        <position position="723"/>
    </location>
</feature>
<feature type="mutagenesis site" description="Disrupts interaction with PARP1. Abolishes the release from auto-inhibition through macro domain binding to the N-terminal ATPase module. Reduces interaction of the macro domain with the N-terminal ATPase module; when associated with E-307, E-308 and E-398; E-319, E-320, E-407 and E-422." evidence="14">
    <original>G</original>
    <variation>E</variation>
    <location>
        <position position="750"/>
    </location>
</feature>
<feature type="mutagenesis site" description="Loss of auto-inhibition, leading to constitutive ATP-dependent chromatin remodeler activity." evidence="13">
    <original>R</original>
    <variation>E</variation>
    <location>
        <position position="857"/>
    </location>
</feature>
<feature type="sequence conflict" description="In Ref. 3; ABQ59048." evidence="24" ref="3">
    <original>E</original>
    <variation>EVFE</variation>
    <location>
        <position position="192"/>
    </location>
</feature>
<feature type="sequence conflict" description="In Ref. 2; BAG56702." evidence="24" ref="2">
    <original>M</original>
    <variation>T</variation>
    <location>
        <position position="295"/>
    </location>
</feature>
<feature type="sequence conflict" description="In Ref. 2; BAB55248." evidence="24" ref="2">
    <original>L</original>
    <variation>P</variation>
    <location>
        <position position="379"/>
    </location>
</feature>
<feature type="sequence conflict" description="In Ref. 6; BAD97216." evidence="24" ref="6">
    <original>N</original>
    <variation>D</variation>
    <location>
        <position position="447"/>
    </location>
</feature>
<feature type="sequence conflict" description="In Ref. 6; BAD97216." evidence="24" ref="6">
    <original>N</original>
    <variation>S</variation>
    <location>
        <position position="597"/>
    </location>
</feature>
<feature type="sequence conflict" description="In Ref. 2; BAA91637." evidence="24" ref="2">
    <original>M</original>
    <variation>V</variation>
    <location>
        <position position="674"/>
    </location>
</feature>
<feature type="turn" evidence="37">
    <location>
        <begin position="21"/>
        <end position="24"/>
    </location>
</feature>
<feature type="helix" evidence="36">
    <location>
        <begin position="33"/>
        <end position="39"/>
    </location>
</feature>
<feature type="helix" evidence="36">
    <location>
        <begin position="48"/>
        <end position="63"/>
    </location>
</feature>
<feature type="strand" evidence="36">
    <location>
        <begin position="67"/>
        <end position="69"/>
    </location>
</feature>
<feature type="helix" evidence="36">
    <location>
        <begin position="77"/>
        <end position="90"/>
    </location>
</feature>
<feature type="strand" evidence="36">
    <location>
        <begin position="98"/>
        <end position="102"/>
    </location>
</feature>
<feature type="helix" evidence="36">
    <location>
        <begin position="104"/>
        <end position="106"/>
    </location>
</feature>
<feature type="helix" evidence="36">
    <location>
        <begin position="107"/>
        <end position="117"/>
    </location>
</feature>
<feature type="strand" evidence="36">
    <location>
        <begin position="123"/>
        <end position="125"/>
    </location>
</feature>
<feature type="helix" evidence="36">
    <location>
        <begin position="130"/>
        <end position="137"/>
    </location>
</feature>
<feature type="turn" evidence="38">
    <location>
        <begin position="140"/>
        <end position="143"/>
    </location>
</feature>
<feature type="strand" evidence="36">
    <location>
        <begin position="147"/>
        <end position="152"/>
    </location>
</feature>
<feature type="helix" evidence="36">
    <location>
        <begin position="153"/>
        <end position="158"/>
    </location>
</feature>
<feature type="turn" evidence="37">
    <location>
        <begin position="159"/>
        <end position="161"/>
    </location>
</feature>
<feature type="helix" evidence="36">
    <location>
        <begin position="162"/>
        <end position="164"/>
    </location>
</feature>
<feature type="strand" evidence="36">
    <location>
        <begin position="169"/>
        <end position="175"/>
    </location>
</feature>
<feature type="helix" evidence="36">
    <location>
        <begin position="176"/>
        <end position="178"/>
    </location>
</feature>
<feature type="helix" evidence="36">
    <location>
        <begin position="185"/>
        <end position="191"/>
    </location>
</feature>
<feature type="strand" evidence="36">
    <location>
        <begin position="196"/>
        <end position="201"/>
    </location>
</feature>
<feature type="strand" evidence="38">
    <location>
        <begin position="203"/>
        <end position="205"/>
    </location>
</feature>
<feature type="helix" evidence="37">
    <location>
        <begin position="206"/>
        <end position="208"/>
    </location>
</feature>
<feature type="helix" evidence="36">
    <location>
        <begin position="210"/>
        <end position="220"/>
    </location>
</feature>
<feature type="turn" evidence="36">
    <location>
        <begin position="222"/>
        <end position="224"/>
    </location>
</feature>
<feature type="helix" evidence="36">
    <location>
        <begin position="227"/>
        <end position="229"/>
    </location>
</feature>
<feature type="helix" evidence="36">
    <location>
        <begin position="230"/>
        <end position="236"/>
    </location>
</feature>
<feature type="helix" evidence="38">
    <location>
        <begin position="238"/>
        <end position="240"/>
    </location>
</feature>
<feature type="helix" evidence="36">
    <location>
        <begin position="244"/>
        <end position="253"/>
    </location>
</feature>
<feature type="turn" evidence="36">
    <location>
        <begin position="254"/>
        <end position="257"/>
    </location>
</feature>
<feature type="turn" evidence="36">
    <location>
        <begin position="263"/>
        <end position="266"/>
    </location>
</feature>
<feature type="strand" evidence="36">
    <location>
        <begin position="276"/>
        <end position="280"/>
    </location>
</feature>
<feature type="helix" evidence="36">
    <location>
        <begin position="284"/>
        <end position="295"/>
    </location>
</feature>
<feature type="helix" evidence="38">
    <location>
        <begin position="300"/>
        <end position="303"/>
    </location>
</feature>
<feature type="turn" evidence="38">
    <location>
        <begin position="304"/>
        <end position="308"/>
    </location>
</feature>
<feature type="helix" evidence="36">
    <location>
        <begin position="314"/>
        <end position="323"/>
    </location>
</feature>
<feature type="helix" evidence="36">
    <location>
        <begin position="325"/>
        <end position="327"/>
    </location>
</feature>
<feature type="helix" evidence="36">
    <location>
        <begin position="329"/>
        <end position="331"/>
    </location>
</feature>
<feature type="turn" evidence="36">
    <location>
        <begin position="341"/>
        <end position="345"/>
    </location>
</feature>
<feature type="helix" evidence="36">
    <location>
        <begin position="347"/>
        <end position="362"/>
    </location>
</feature>
<feature type="strand" evidence="36">
    <location>
        <begin position="366"/>
        <end position="371"/>
    </location>
</feature>
<feature type="helix" evidence="36">
    <location>
        <begin position="373"/>
        <end position="386"/>
    </location>
</feature>
<feature type="strand" evidence="36">
    <location>
        <begin position="390"/>
        <end position="393"/>
    </location>
</feature>
<feature type="strand" evidence="36">
    <location>
        <begin position="395"/>
        <end position="397"/>
    </location>
</feature>
<feature type="helix" evidence="36">
    <location>
        <begin position="400"/>
        <end position="411"/>
    </location>
</feature>
<feature type="strand" evidence="36">
    <location>
        <begin position="416"/>
        <end position="420"/>
    </location>
</feature>
<feature type="helix" evidence="36">
    <location>
        <begin position="421"/>
        <end position="424"/>
    </location>
</feature>
<feature type="strand" evidence="36">
    <location>
        <begin position="425"/>
        <end position="427"/>
    </location>
</feature>
<feature type="strand" evidence="36">
    <location>
        <begin position="435"/>
        <end position="439"/>
    </location>
</feature>
<feature type="helix" evidence="36">
    <location>
        <begin position="445"/>
        <end position="453"/>
    </location>
</feature>
<feature type="strand" evidence="36">
    <location>
        <begin position="464"/>
        <end position="471"/>
    </location>
</feature>
<feature type="helix" evidence="36">
    <location>
        <begin position="475"/>
        <end position="487"/>
    </location>
</feature>
<feature type="helix" evidence="36">
    <location>
        <begin position="490"/>
        <end position="497"/>
    </location>
</feature>
<feature type="turn" evidence="36">
    <location>
        <begin position="517"/>
        <end position="519"/>
    </location>
</feature>
<feature type="turn" evidence="36">
    <location>
        <begin position="523"/>
        <end position="526"/>
    </location>
</feature>
<feature type="helix" evidence="36">
    <location>
        <begin position="537"/>
        <end position="544"/>
    </location>
</feature>
<feature type="strand" evidence="36">
    <location>
        <begin position="549"/>
        <end position="552"/>
    </location>
</feature>
<feature type="strand" evidence="36">
    <location>
        <begin position="569"/>
        <end position="573"/>
    </location>
</feature>
<feature type="helix" evidence="36">
    <location>
        <begin position="587"/>
        <end position="598"/>
    </location>
</feature>
<feature type="turn" evidence="36">
    <location>
        <begin position="614"/>
        <end position="616"/>
    </location>
</feature>
<feature type="helix" evidence="37">
    <location>
        <begin position="641"/>
        <end position="666"/>
    </location>
</feature>
<feature type="strand" evidence="37">
    <location>
        <begin position="718"/>
        <end position="722"/>
    </location>
</feature>
<feature type="strand" evidence="37">
    <location>
        <begin position="734"/>
        <end position="736"/>
    </location>
</feature>
<feature type="strand" evidence="37">
    <location>
        <begin position="738"/>
        <end position="740"/>
    </location>
</feature>
<feature type="helix" evidence="37">
    <location>
        <begin position="750"/>
        <end position="757"/>
    </location>
</feature>
<feature type="turn" evidence="37">
    <location>
        <begin position="758"/>
        <end position="760"/>
    </location>
</feature>
<feature type="helix" evidence="37">
    <location>
        <begin position="761"/>
        <end position="771"/>
    </location>
</feature>
<feature type="strand" evidence="37">
    <location>
        <begin position="800"/>
        <end position="802"/>
    </location>
</feature>
<feature type="helix" evidence="37">
    <location>
        <begin position="808"/>
        <end position="810"/>
    </location>
</feature>
<feature type="helix" evidence="37">
    <location>
        <begin position="818"/>
        <end position="834"/>
    </location>
</feature>
<feature type="strand" evidence="37">
    <location>
        <begin position="837"/>
        <end position="840"/>
    </location>
</feature>
<feature type="strand" evidence="37">
    <location>
        <begin position="845"/>
        <end position="847"/>
    </location>
</feature>
<feature type="helix" evidence="37">
    <location>
        <begin position="849"/>
        <end position="862"/>
    </location>
</feature>
<feature type="turn" evidence="37">
    <location>
        <begin position="863"/>
        <end position="867"/>
    </location>
</feature>
<feature type="strand" evidence="37">
    <location>
        <begin position="870"/>
        <end position="874"/>
    </location>
</feature>
<gene>
    <name evidence="23 25" type="primary">CHD1L</name>
    <name evidence="22" type="synonym">ALC1</name>
</gene>
<protein>
    <recommendedName>
        <fullName evidence="24">Chromodomain-helicase-DNA-binding protein 1-like</fullName>
        <ecNumber evidence="13 14 18">3.6.4.-</ecNumber>
    </recommendedName>
    <alternativeName>
        <fullName evidence="22">Amplified in liver cancer protein 1</fullName>
    </alternativeName>
</protein>
<accession>Q86WJ1</accession>
<accession>A5YM64</accession>
<accession>B4DDE1</accession>
<accession>B5MDZ7</accession>
<accession>Q53EZ3</accession>
<accession>Q5VXX7</accession>
<accession>Q6DD94</accession>
<accession>Q6PK83</accession>
<accession>Q86XH3</accession>
<accession>Q96HF7</accession>
<accession>Q96SP3</accession>
<accession>Q9BVJ1</accession>
<accession>Q9NVV8</accession>
<dbReference type="EC" id="3.6.4.-" evidence="13 14 18"/>
<dbReference type="EMBL" id="AF537213">
    <property type="protein sequence ID" value="AAO49505.1"/>
    <property type="molecule type" value="mRNA"/>
</dbReference>
<dbReference type="EMBL" id="AK001342">
    <property type="protein sequence ID" value="BAA91637.1"/>
    <property type="molecule type" value="mRNA"/>
</dbReference>
<dbReference type="EMBL" id="AK027631">
    <property type="protein sequence ID" value="BAB55248.1"/>
    <property type="status" value="ALT_FRAME"/>
    <property type="molecule type" value="mRNA"/>
</dbReference>
<dbReference type="EMBL" id="AK293157">
    <property type="protein sequence ID" value="BAG56702.1"/>
    <property type="molecule type" value="mRNA"/>
</dbReference>
<dbReference type="EMBL" id="EF560738">
    <property type="protein sequence ID" value="ABQ59048.1"/>
    <property type="molecule type" value="mRNA"/>
</dbReference>
<dbReference type="EMBL" id="AC242426">
    <property type="status" value="NOT_ANNOTATED_CDS"/>
    <property type="molecule type" value="Genomic_DNA"/>
</dbReference>
<dbReference type="EMBL" id="AL356378">
    <property type="protein sequence ID" value="CAH72650.1"/>
    <property type="molecule type" value="Genomic_DNA"/>
</dbReference>
<dbReference type="EMBL" id="BC001171">
    <property type="protein sequence ID" value="AAH01171.1"/>
    <property type="molecule type" value="mRNA"/>
</dbReference>
<dbReference type="EMBL" id="BC005038">
    <property type="protein sequence ID" value="AAH05038.1"/>
    <property type="molecule type" value="mRNA"/>
</dbReference>
<dbReference type="EMBL" id="BC008649">
    <property type="protein sequence ID" value="AAH08649.1"/>
    <property type="molecule type" value="mRNA"/>
</dbReference>
<dbReference type="EMBL" id="BC043501">
    <property type="protein sequence ID" value="AAH43501.1"/>
    <property type="molecule type" value="mRNA"/>
</dbReference>
<dbReference type="EMBL" id="BC077717">
    <property type="protein sequence ID" value="AAH77717.1"/>
    <property type="molecule type" value="mRNA"/>
</dbReference>
<dbReference type="EMBL" id="AK223496">
    <property type="protein sequence ID" value="BAD97216.1"/>
    <property type="molecule type" value="mRNA"/>
</dbReference>
<dbReference type="CCDS" id="CCDS58021.1">
    <molecule id="Q86WJ1-3"/>
</dbReference>
<dbReference type="CCDS" id="CCDS927.1">
    <molecule id="Q86WJ1-1"/>
</dbReference>
<dbReference type="RefSeq" id="NP_001243266.1">
    <molecule id="Q86WJ1-5"/>
    <property type="nucleotide sequence ID" value="NM_001256337.3"/>
</dbReference>
<dbReference type="RefSeq" id="NP_001243267.1">
    <molecule id="Q86WJ1-3"/>
    <property type="nucleotide sequence ID" value="NM_001256338.3"/>
</dbReference>
<dbReference type="RefSeq" id="NP_001335382.1">
    <molecule id="Q86WJ1-4"/>
    <property type="nucleotide sequence ID" value="NM_001348453.2"/>
</dbReference>
<dbReference type="RefSeq" id="NP_001335385.1">
    <molecule id="Q86WJ1-5"/>
    <property type="nucleotide sequence ID" value="NM_001348456.2"/>
</dbReference>
<dbReference type="RefSeq" id="NP_001335386.1">
    <molecule id="Q86WJ1-5"/>
    <property type="nucleotide sequence ID" value="NM_001348457.2"/>
</dbReference>
<dbReference type="RefSeq" id="NP_001335387.1">
    <molecule id="Q86WJ1-5"/>
    <property type="nucleotide sequence ID" value="NM_001348458.2"/>
</dbReference>
<dbReference type="RefSeq" id="NP_001335388.1">
    <molecule id="Q86WJ1-5"/>
    <property type="nucleotide sequence ID" value="NM_001348459.2"/>
</dbReference>
<dbReference type="RefSeq" id="NP_001335389.1">
    <molecule id="Q86WJ1-5"/>
    <property type="nucleotide sequence ID" value="NM_001348460.2"/>
</dbReference>
<dbReference type="RefSeq" id="NP_001335390.1">
    <molecule id="Q86WJ1-5"/>
    <property type="nucleotide sequence ID" value="NM_001348461.2"/>
</dbReference>
<dbReference type="RefSeq" id="NP_001335391.1">
    <molecule id="Q86WJ1-5"/>
    <property type="nucleotide sequence ID" value="NM_001348462.2"/>
</dbReference>
<dbReference type="RefSeq" id="NP_001335392.1">
    <molecule id="Q86WJ1-5"/>
    <property type="nucleotide sequence ID" value="NM_001348463.2"/>
</dbReference>
<dbReference type="RefSeq" id="NP_001335393.1">
    <molecule id="Q86WJ1-5"/>
    <property type="nucleotide sequence ID" value="NM_001348464.2"/>
</dbReference>
<dbReference type="RefSeq" id="NP_001335394.1">
    <molecule id="Q86WJ1-5"/>
    <property type="nucleotide sequence ID" value="NM_001348465.2"/>
</dbReference>
<dbReference type="RefSeq" id="NP_001335395.1">
    <molecule id="Q86WJ1-5"/>
    <property type="nucleotide sequence ID" value="NM_001348466.2"/>
</dbReference>
<dbReference type="RefSeq" id="NP_004275.4">
    <molecule id="Q86WJ1-1"/>
    <property type="nucleotide sequence ID" value="NM_004284.5"/>
</dbReference>
<dbReference type="RefSeq" id="NP_078844.2">
    <molecule id="Q86WJ1-4"/>
    <property type="nucleotide sequence ID" value="NM_024568.3"/>
</dbReference>
<dbReference type="PDB" id="6ZHX">
    <property type="method" value="EM"/>
    <property type="resolution" value="2.50 A"/>
    <property type="chains" value="K/L=604-639"/>
</dbReference>
<dbReference type="PDB" id="6ZHY">
    <property type="method" value="EM"/>
    <property type="resolution" value="3.00 A"/>
    <property type="chains" value="K=604-639"/>
</dbReference>
<dbReference type="PDB" id="7ENN">
    <property type="method" value="EM"/>
    <property type="resolution" value="2.80 A"/>
    <property type="chains" value="K=1-897"/>
</dbReference>
<dbReference type="PDB" id="7EPU">
    <property type="method" value="X-ray"/>
    <property type="resolution" value="3.50 A"/>
    <property type="chains" value="B=1-880"/>
</dbReference>
<dbReference type="PDB" id="7OTQ">
    <property type="method" value="EM"/>
    <property type="resolution" value="4.80 A"/>
    <property type="chains" value="K=16-879"/>
</dbReference>
<dbReference type="PDB" id="8B0A">
    <property type="method" value="EM"/>
    <property type="resolution" value="3.00 A"/>
    <property type="chains" value="K=16-879"/>
</dbReference>
<dbReference type="PDBsum" id="6ZHX"/>
<dbReference type="PDBsum" id="6ZHY"/>
<dbReference type="PDBsum" id="7ENN"/>
<dbReference type="PDBsum" id="7EPU"/>
<dbReference type="PDBsum" id="7OTQ"/>
<dbReference type="PDBsum" id="8B0A"/>
<dbReference type="EMDB" id="EMD-11220"/>
<dbReference type="EMDB" id="EMD-11221"/>
<dbReference type="EMDB" id="EMD-13065"/>
<dbReference type="EMDB" id="EMD-13070"/>
<dbReference type="EMDB" id="EMD-15777"/>
<dbReference type="EMDB" id="EMD-31217"/>
<dbReference type="SMR" id="Q86WJ1"/>
<dbReference type="BioGRID" id="114929">
    <property type="interactions" value="108"/>
</dbReference>
<dbReference type="DIP" id="DIP-48933N"/>
<dbReference type="FunCoup" id="Q86WJ1">
    <property type="interactions" value="2288"/>
</dbReference>
<dbReference type="IntAct" id="Q86WJ1">
    <property type="interactions" value="62"/>
</dbReference>
<dbReference type="MINT" id="Q86WJ1"/>
<dbReference type="STRING" id="9606.ENSP00000358262"/>
<dbReference type="GlyCosmos" id="Q86WJ1">
    <property type="glycosylation" value="1 site, 1 glycan"/>
</dbReference>
<dbReference type="GlyGen" id="Q86WJ1">
    <property type="glycosylation" value="2 sites, 1 N-linked glycan (1 site), 1 O-linked glycan (1 site)"/>
</dbReference>
<dbReference type="iPTMnet" id="Q86WJ1"/>
<dbReference type="PhosphoSitePlus" id="Q86WJ1"/>
<dbReference type="BioMuta" id="CHD1L"/>
<dbReference type="DMDM" id="311033359"/>
<dbReference type="jPOST" id="Q86WJ1"/>
<dbReference type="MassIVE" id="Q86WJ1"/>
<dbReference type="PaxDb" id="9606-ENSP00000358262"/>
<dbReference type="PeptideAtlas" id="Q86WJ1"/>
<dbReference type="ProteomicsDB" id="6203"/>
<dbReference type="ProteomicsDB" id="70174">
    <molecule id="Q86WJ1-1"/>
</dbReference>
<dbReference type="ProteomicsDB" id="70175">
    <molecule id="Q86WJ1-2"/>
</dbReference>
<dbReference type="ProteomicsDB" id="70176">
    <molecule id="Q86WJ1-3"/>
</dbReference>
<dbReference type="ProteomicsDB" id="70177">
    <molecule id="Q86WJ1-4"/>
</dbReference>
<dbReference type="Pumba" id="Q86WJ1"/>
<dbReference type="ABCD" id="Q86WJ1">
    <property type="antibodies" value="1 sequenced antibody"/>
</dbReference>
<dbReference type="Antibodypedia" id="20241">
    <property type="antibodies" value="198 antibodies from 30 providers"/>
</dbReference>
<dbReference type="DNASU" id="9557"/>
<dbReference type="Ensembl" id="ENST00000369258.8">
    <molecule id="Q86WJ1-1"/>
    <property type="protein sequence ID" value="ENSP00000358262.4"/>
    <property type="gene ID" value="ENSG00000131778.20"/>
</dbReference>
<dbReference type="Ensembl" id="ENST00000369259.4">
    <molecule id="Q86WJ1-3"/>
    <property type="protein sequence ID" value="ENSP00000358263.3"/>
    <property type="gene ID" value="ENSG00000131778.20"/>
</dbReference>
<dbReference type="GeneID" id="9557"/>
<dbReference type="KEGG" id="hsa:9557"/>
<dbReference type="MANE-Select" id="ENST00000369258.8">
    <property type="protein sequence ID" value="ENSP00000358262.4"/>
    <property type="RefSeq nucleotide sequence ID" value="NM_004284.6"/>
    <property type="RefSeq protein sequence ID" value="NP_004275.4"/>
</dbReference>
<dbReference type="UCSC" id="uc001epm.6">
    <molecule id="Q86WJ1-1"/>
    <property type="organism name" value="human"/>
</dbReference>
<dbReference type="AGR" id="HGNC:1916"/>
<dbReference type="CTD" id="9557"/>
<dbReference type="DisGeNET" id="9557"/>
<dbReference type="GeneCards" id="CHD1L"/>
<dbReference type="HGNC" id="HGNC:1916">
    <property type="gene designation" value="CHD1L"/>
</dbReference>
<dbReference type="HPA" id="ENSG00000131778">
    <property type="expression patterns" value="Low tissue specificity"/>
</dbReference>
<dbReference type="MalaCards" id="CHD1L"/>
<dbReference type="MIM" id="613039">
    <property type="type" value="gene"/>
</dbReference>
<dbReference type="neXtProt" id="NX_Q86WJ1"/>
<dbReference type="OpenTargets" id="ENSG00000131778"/>
<dbReference type="PharmGKB" id="PA26452"/>
<dbReference type="VEuPathDB" id="HostDB:ENSG00000131778"/>
<dbReference type="eggNOG" id="KOG0385">
    <property type="taxonomic scope" value="Eukaryota"/>
</dbReference>
<dbReference type="GeneTree" id="ENSGT00940000159402"/>
<dbReference type="InParanoid" id="Q86WJ1"/>
<dbReference type="OMA" id="WQNELFR"/>
<dbReference type="OrthoDB" id="448448at2759"/>
<dbReference type="PAN-GO" id="Q86WJ1">
    <property type="GO annotations" value="4 GO annotations based on evolutionary models"/>
</dbReference>
<dbReference type="PhylomeDB" id="Q86WJ1"/>
<dbReference type="TreeFam" id="TF333326"/>
<dbReference type="PathwayCommons" id="Q86WJ1"/>
<dbReference type="Reactome" id="R-HSA-5696395">
    <property type="pathway name" value="Formation of Incision Complex in GG-NER"/>
</dbReference>
<dbReference type="Reactome" id="R-HSA-5696400">
    <property type="pathway name" value="Dual Incision in GG-NER"/>
</dbReference>
<dbReference type="SignaLink" id="Q86WJ1"/>
<dbReference type="BioGRID-ORCS" id="9557">
    <property type="hits" value="15 hits in 1172 CRISPR screens"/>
</dbReference>
<dbReference type="ChiTaRS" id="CHD1L">
    <property type="organism name" value="human"/>
</dbReference>
<dbReference type="GeneWiki" id="CHD1L"/>
<dbReference type="GenomeRNAi" id="9557"/>
<dbReference type="Pharos" id="Q86WJ1">
    <property type="development level" value="Tbio"/>
</dbReference>
<dbReference type="PRO" id="PR:Q86WJ1"/>
<dbReference type="Proteomes" id="UP000005640">
    <property type="component" value="Chromosome 1"/>
</dbReference>
<dbReference type="RNAct" id="Q86WJ1">
    <property type="molecule type" value="protein"/>
</dbReference>
<dbReference type="Bgee" id="ENSG00000131778">
    <property type="expression patterns" value="Expressed in primordial germ cell in gonad and 160 other cell types or tissues"/>
</dbReference>
<dbReference type="ExpressionAtlas" id="Q86WJ1">
    <property type="expression patterns" value="baseline and differential"/>
</dbReference>
<dbReference type="GO" id="GO:0005654">
    <property type="term" value="C:nucleoplasm"/>
    <property type="evidence" value="ECO:0000314"/>
    <property type="project" value="HPA"/>
</dbReference>
<dbReference type="GO" id="GO:0005634">
    <property type="term" value="C:nucleus"/>
    <property type="evidence" value="ECO:0000314"/>
    <property type="project" value="UniProtKB"/>
</dbReference>
<dbReference type="GO" id="GO:0090734">
    <property type="term" value="C:site of DNA damage"/>
    <property type="evidence" value="ECO:0000314"/>
    <property type="project" value="UniProt"/>
</dbReference>
<dbReference type="GO" id="GO:0035861">
    <property type="term" value="C:site of double-strand break"/>
    <property type="evidence" value="ECO:0000314"/>
    <property type="project" value="UniProtKB"/>
</dbReference>
<dbReference type="GO" id="GO:0005524">
    <property type="term" value="F:ATP binding"/>
    <property type="evidence" value="ECO:0007669"/>
    <property type="project" value="UniProtKB-KW"/>
</dbReference>
<dbReference type="GO" id="GO:0016887">
    <property type="term" value="F:ATP hydrolysis activity"/>
    <property type="evidence" value="ECO:0000315"/>
    <property type="project" value="UniProtKB"/>
</dbReference>
<dbReference type="GO" id="GO:0140658">
    <property type="term" value="F:ATP-dependent chromatin remodeler activity"/>
    <property type="evidence" value="ECO:0000314"/>
    <property type="project" value="UniProt"/>
</dbReference>
<dbReference type="GO" id="GO:0003678">
    <property type="term" value="F:DNA helicase activity"/>
    <property type="evidence" value="ECO:0000304"/>
    <property type="project" value="UniProtKB"/>
</dbReference>
<dbReference type="GO" id="GO:0140566">
    <property type="term" value="F:histone reader activity"/>
    <property type="evidence" value="ECO:0000314"/>
    <property type="project" value="UniProtKB"/>
</dbReference>
<dbReference type="GO" id="GO:0031491">
    <property type="term" value="F:nucleosome binding"/>
    <property type="evidence" value="ECO:0000314"/>
    <property type="project" value="UniProtKB"/>
</dbReference>
<dbReference type="GO" id="GO:0000166">
    <property type="term" value="F:nucleotide binding"/>
    <property type="evidence" value="ECO:0000314"/>
    <property type="project" value="UniProtKB"/>
</dbReference>
<dbReference type="GO" id="GO:0160004">
    <property type="term" value="F:poly-ADP-D-ribose modification-dependent protein binding"/>
    <property type="evidence" value="ECO:0000314"/>
    <property type="project" value="UniProt"/>
</dbReference>
<dbReference type="GO" id="GO:0006338">
    <property type="term" value="P:chromatin remodeling"/>
    <property type="evidence" value="ECO:0000314"/>
    <property type="project" value="UniProtKB"/>
</dbReference>
<dbReference type="GO" id="GO:0006974">
    <property type="term" value="P:DNA damage response"/>
    <property type="evidence" value="ECO:0000314"/>
    <property type="project" value="UniProtKB"/>
</dbReference>
<dbReference type="GO" id="GO:0006281">
    <property type="term" value="P:DNA repair"/>
    <property type="evidence" value="ECO:0000314"/>
    <property type="project" value="UniProt"/>
</dbReference>
<dbReference type="CDD" id="cd18006">
    <property type="entry name" value="DEXHc_CHD1L"/>
    <property type="match status" value="1"/>
</dbReference>
<dbReference type="CDD" id="cd03331">
    <property type="entry name" value="Macro_Poa1p-like_SNF2"/>
    <property type="match status" value="1"/>
</dbReference>
<dbReference type="CDD" id="cd18793">
    <property type="entry name" value="SF2_C_SNF"/>
    <property type="match status" value="1"/>
</dbReference>
<dbReference type="FunFam" id="3.40.220.10:FF:000004">
    <property type="entry name" value="chromodomain-helicase-DNA-binding protein 1-like isoform X1"/>
    <property type="match status" value="1"/>
</dbReference>
<dbReference type="FunFam" id="3.40.50.10810:FF:000037">
    <property type="entry name" value="chromodomain-helicase-DNA-binding protein 1-like isoform X1"/>
    <property type="match status" value="1"/>
</dbReference>
<dbReference type="FunFam" id="3.40.50.300:FF:000607">
    <property type="entry name" value="chromodomain-helicase-DNA-binding protein 1-like isoform X1"/>
    <property type="match status" value="1"/>
</dbReference>
<dbReference type="Gene3D" id="3.40.220.10">
    <property type="entry name" value="Leucine Aminopeptidase, subunit E, domain 1"/>
    <property type="match status" value="1"/>
</dbReference>
<dbReference type="Gene3D" id="3.40.50.300">
    <property type="entry name" value="P-loop containing nucleotide triphosphate hydrolases"/>
    <property type="match status" value="1"/>
</dbReference>
<dbReference type="Gene3D" id="3.40.50.10810">
    <property type="entry name" value="Tandem AAA-ATPase domain"/>
    <property type="match status" value="1"/>
</dbReference>
<dbReference type="InterPro" id="IPR031053">
    <property type="entry name" value="ALC1"/>
</dbReference>
<dbReference type="InterPro" id="IPR002464">
    <property type="entry name" value="DNA/RNA_helicase_DEAH_CS"/>
</dbReference>
<dbReference type="InterPro" id="IPR014001">
    <property type="entry name" value="Helicase_ATP-bd"/>
</dbReference>
<dbReference type="InterPro" id="IPR001650">
    <property type="entry name" value="Helicase_C-like"/>
</dbReference>
<dbReference type="InterPro" id="IPR002589">
    <property type="entry name" value="Macro_dom"/>
</dbReference>
<dbReference type="InterPro" id="IPR043472">
    <property type="entry name" value="Macro_dom-like"/>
</dbReference>
<dbReference type="InterPro" id="IPR027417">
    <property type="entry name" value="P-loop_NTPase"/>
</dbReference>
<dbReference type="InterPro" id="IPR038718">
    <property type="entry name" value="SNF2-like_sf"/>
</dbReference>
<dbReference type="InterPro" id="IPR049730">
    <property type="entry name" value="SNF2/RAD54-like_C"/>
</dbReference>
<dbReference type="InterPro" id="IPR000330">
    <property type="entry name" value="SNF2_N"/>
</dbReference>
<dbReference type="PANTHER" id="PTHR47157">
    <property type="entry name" value="CHROMODOMAIN-HELICASE-DNA-BINDING PROTEIN 1-LIKE"/>
    <property type="match status" value="1"/>
</dbReference>
<dbReference type="PANTHER" id="PTHR47157:SF1">
    <property type="entry name" value="CHROMODOMAIN-HELICASE-DNA-BINDING PROTEIN 1-LIKE"/>
    <property type="match status" value="1"/>
</dbReference>
<dbReference type="Pfam" id="PF00271">
    <property type="entry name" value="Helicase_C"/>
    <property type="match status" value="1"/>
</dbReference>
<dbReference type="Pfam" id="PF00176">
    <property type="entry name" value="SNF2-rel_dom"/>
    <property type="match status" value="1"/>
</dbReference>
<dbReference type="SMART" id="SM00487">
    <property type="entry name" value="DEXDc"/>
    <property type="match status" value="1"/>
</dbReference>
<dbReference type="SMART" id="SM00490">
    <property type="entry name" value="HELICc"/>
    <property type="match status" value="1"/>
</dbReference>
<dbReference type="SUPFAM" id="SSF52949">
    <property type="entry name" value="Macro domain-like"/>
    <property type="match status" value="1"/>
</dbReference>
<dbReference type="SUPFAM" id="SSF52540">
    <property type="entry name" value="P-loop containing nucleoside triphosphate hydrolases"/>
    <property type="match status" value="2"/>
</dbReference>
<dbReference type="PROSITE" id="PS00690">
    <property type="entry name" value="DEAH_ATP_HELICASE"/>
    <property type="match status" value="1"/>
</dbReference>
<dbReference type="PROSITE" id="PS51192">
    <property type="entry name" value="HELICASE_ATP_BIND_1"/>
    <property type="match status" value="1"/>
</dbReference>
<dbReference type="PROSITE" id="PS51194">
    <property type="entry name" value="HELICASE_CTER"/>
    <property type="match status" value="1"/>
</dbReference>
<dbReference type="PROSITE" id="PS51154">
    <property type="entry name" value="MACRO"/>
    <property type="match status" value="1"/>
</dbReference>
<keyword id="KW-0002">3D-structure</keyword>
<keyword id="KW-0025">Alternative splicing</keyword>
<keyword id="KW-0067">ATP-binding</keyword>
<keyword id="KW-0158">Chromosome</keyword>
<keyword id="KW-0175">Coiled coil</keyword>
<keyword id="KW-0227">DNA damage</keyword>
<keyword id="KW-0234">DNA repair</keyword>
<keyword id="KW-0378">Hydrolase</keyword>
<keyword id="KW-0488">Methylation</keyword>
<keyword id="KW-0547">Nucleotide-binding</keyword>
<keyword id="KW-0539">Nucleus</keyword>
<keyword id="KW-0597">Phosphoprotein</keyword>
<keyword id="KW-1267">Proteomics identification</keyword>
<keyword id="KW-1185">Reference proteome</keyword>
<reference key="1">
    <citation type="journal article" date="2008" name="Hepatology">
        <title>Isolation and characterization of a novel oncogene, amplified in liver cancer 1, within a commonly amplified region at 1q21 in hepatocellular carcinoma.</title>
        <authorList>
            <person name="Ma N.-F."/>
            <person name="Hu L."/>
            <person name="Fung J.-M."/>
            <person name="Xie D."/>
            <person name="Zheng B.-J."/>
            <person name="Chen L."/>
            <person name="Tang D.-J."/>
            <person name="Fu L."/>
            <person name="Wu Z."/>
            <person name="Chen M."/>
            <person name="Fang Y."/>
            <person name="Guan X.-Y."/>
        </authorList>
    </citation>
    <scope>NUCLEOTIDE SEQUENCE [MRNA] (ISOFORM 1)</scope>
    <scope>TISSUE SPECIFICITY</scope>
</reference>
<reference key="2">
    <citation type="journal article" date="2004" name="Nat. Genet.">
        <title>Complete sequencing and characterization of 21,243 full-length human cDNAs.</title>
        <authorList>
            <person name="Ota T."/>
            <person name="Suzuki Y."/>
            <person name="Nishikawa T."/>
            <person name="Otsuki T."/>
            <person name="Sugiyama T."/>
            <person name="Irie R."/>
            <person name="Wakamatsu A."/>
            <person name="Hayashi K."/>
            <person name="Sato H."/>
            <person name="Nagai K."/>
            <person name="Kimura K."/>
            <person name="Makita H."/>
            <person name="Sekine M."/>
            <person name="Obayashi M."/>
            <person name="Nishi T."/>
            <person name="Shibahara T."/>
            <person name="Tanaka T."/>
            <person name="Ishii S."/>
            <person name="Yamamoto J."/>
            <person name="Saito K."/>
            <person name="Kawai Y."/>
            <person name="Isono Y."/>
            <person name="Nakamura Y."/>
            <person name="Nagahari K."/>
            <person name="Murakami K."/>
            <person name="Yasuda T."/>
            <person name="Iwayanagi T."/>
            <person name="Wagatsuma M."/>
            <person name="Shiratori A."/>
            <person name="Sudo H."/>
            <person name="Hosoiri T."/>
            <person name="Kaku Y."/>
            <person name="Kodaira H."/>
            <person name="Kondo H."/>
            <person name="Sugawara M."/>
            <person name="Takahashi M."/>
            <person name="Kanda K."/>
            <person name="Yokoi T."/>
            <person name="Furuya T."/>
            <person name="Kikkawa E."/>
            <person name="Omura Y."/>
            <person name="Abe K."/>
            <person name="Kamihara K."/>
            <person name="Katsuta N."/>
            <person name="Sato K."/>
            <person name="Tanikawa M."/>
            <person name="Yamazaki M."/>
            <person name="Ninomiya K."/>
            <person name="Ishibashi T."/>
            <person name="Yamashita H."/>
            <person name="Murakawa K."/>
            <person name="Fujimori K."/>
            <person name="Tanai H."/>
            <person name="Kimata M."/>
            <person name="Watanabe M."/>
            <person name="Hiraoka S."/>
            <person name="Chiba Y."/>
            <person name="Ishida S."/>
            <person name="Ono Y."/>
            <person name="Takiguchi S."/>
            <person name="Watanabe S."/>
            <person name="Yosida M."/>
            <person name="Hotuta T."/>
            <person name="Kusano J."/>
            <person name="Kanehori K."/>
            <person name="Takahashi-Fujii A."/>
            <person name="Hara H."/>
            <person name="Tanase T.-O."/>
            <person name="Nomura Y."/>
            <person name="Togiya S."/>
            <person name="Komai F."/>
            <person name="Hara R."/>
            <person name="Takeuchi K."/>
            <person name="Arita M."/>
            <person name="Imose N."/>
            <person name="Musashino K."/>
            <person name="Yuuki H."/>
            <person name="Oshima A."/>
            <person name="Sasaki N."/>
            <person name="Aotsuka S."/>
            <person name="Yoshikawa Y."/>
            <person name="Matsunawa H."/>
            <person name="Ichihara T."/>
            <person name="Shiohata N."/>
            <person name="Sano S."/>
            <person name="Moriya S."/>
            <person name="Momiyama H."/>
            <person name="Satoh N."/>
            <person name="Takami S."/>
            <person name="Terashima Y."/>
            <person name="Suzuki O."/>
            <person name="Nakagawa S."/>
            <person name="Senoh A."/>
            <person name="Mizoguchi H."/>
            <person name="Goto Y."/>
            <person name="Shimizu F."/>
            <person name="Wakebe H."/>
            <person name="Hishigaki H."/>
            <person name="Watanabe T."/>
            <person name="Sugiyama A."/>
            <person name="Takemoto M."/>
            <person name="Kawakami B."/>
            <person name="Yamazaki M."/>
            <person name="Watanabe K."/>
            <person name="Kumagai A."/>
            <person name="Itakura S."/>
            <person name="Fukuzumi Y."/>
            <person name="Fujimori Y."/>
            <person name="Komiyama M."/>
            <person name="Tashiro H."/>
            <person name="Tanigami A."/>
            <person name="Fujiwara T."/>
            <person name="Ono T."/>
            <person name="Yamada K."/>
            <person name="Fujii Y."/>
            <person name="Ozaki K."/>
            <person name="Hirao M."/>
            <person name="Ohmori Y."/>
            <person name="Kawabata A."/>
            <person name="Hikiji T."/>
            <person name="Kobatake N."/>
            <person name="Inagaki H."/>
            <person name="Ikema Y."/>
            <person name="Okamoto S."/>
            <person name="Okitani R."/>
            <person name="Kawakami T."/>
            <person name="Noguchi S."/>
            <person name="Itoh T."/>
            <person name="Shigeta K."/>
            <person name="Senba T."/>
            <person name="Matsumura K."/>
            <person name="Nakajima Y."/>
            <person name="Mizuno T."/>
            <person name="Morinaga M."/>
            <person name="Sasaki M."/>
            <person name="Togashi T."/>
            <person name="Oyama M."/>
            <person name="Hata H."/>
            <person name="Watanabe M."/>
            <person name="Komatsu T."/>
            <person name="Mizushima-Sugano J."/>
            <person name="Satoh T."/>
            <person name="Shirai Y."/>
            <person name="Takahashi Y."/>
            <person name="Nakagawa K."/>
            <person name="Okumura K."/>
            <person name="Nagase T."/>
            <person name="Nomura N."/>
            <person name="Kikuchi H."/>
            <person name="Masuho Y."/>
            <person name="Yamashita R."/>
            <person name="Nakai K."/>
            <person name="Yada T."/>
            <person name="Nakamura Y."/>
            <person name="Ohara O."/>
            <person name="Isogai T."/>
            <person name="Sugano S."/>
        </authorList>
    </citation>
    <scope>NUCLEOTIDE SEQUENCE [LARGE SCALE MRNA] (ISOFORMS 1; 4 AND 5)</scope>
    <scope>VARIANT CYS-743</scope>
    <source>
        <tissue>Neuron</tissue>
    </source>
</reference>
<reference key="3">
    <citation type="journal article" date="2007" name="BMC Genomics">
        <title>The full-ORF clone resource of the German cDNA consortium.</title>
        <authorList>
            <person name="Bechtel S."/>
            <person name="Rosenfelder H."/>
            <person name="Duda A."/>
            <person name="Schmidt C.P."/>
            <person name="Ernst U."/>
            <person name="Wellenreuther R."/>
            <person name="Mehrle A."/>
            <person name="Schuster C."/>
            <person name="Bahr A."/>
            <person name="Bloecker H."/>
            <person name="Heubner D."/>
            <person name="Hoerlein A."/>
            <person name="Michel G."/>
            <person name="Wedler H."/>
            <person name="Koehrer K."/>
            <person name="Ottenwaelder B."/>
            <person name="Poustka A."/>
            <person name="Wiemann S."/>
            <person name="Schupp I."/>
        </authorList>
    </citation>
    <scope>NUCLEOTIDE SEQUENCE [LARGE SCALE MRNA] (ISOFORM 1)</scope>
    <scope>VARIANT GLN-350</scope>
    <source>
        <tissue>Retina</tissue>
    </source>
</reference>
<reference key="4">
    <citation type="journal article" date="2006" name="Nature">
        <title>The DNA sequence and biological annotation of human chromosome 1.</title>
        <authorList>
            <person name="Gregory S.G."/>
            <person name="Barlow K.F."/>
            <person name="McLay K.E."/>
            <person name="Kaul R."/>
            <person name="Swarbreck D."/>
            <person name="Dunham A."/>
            <person name="Scott C.E."/>
            <person name="Howe K.L."/>
            <person name="Woodfine K."/>
            <person name="Spencer C.C.A."/>
            <person name="Jones M.C."/>
            <person name="Gillson C."/>
            <person name="Searle S."/>
            <person name="Zhou Y."/>
            <person name="Kokocinski F."/>
            <person name="McDonald L."/>
            <person name="Evans R."/>
            <person name="Phillips K."/>
            <person name="Atkinson A."/>
            <person name="Cooper R."/>
            <person name="Jones C."/>
            <person name="Hall R.E."/>
            <person name="Andrews T.D."/>
            <person name="Lloyd C."/>
            <person name="Ainscough R."/>
            <person name="Almeida J.P."/>
            <person name="Ambrose K.D."/>
            <person name="Anderson F."/>
            <person name="Andrew R.W."/>
            <person name="Ashwell R.I.S."/>
            <person name="Aubin K."/>
            <person name="Babbage A.K."/>
            <person name="Bagguley C.L."/>
            <person name="Bailey J."/>
            <person name="Beasley H."/>
            <person name="Bethel G."/>
            <person name="Bird C.P."/>
            <person name="Bray-Allen S."/>
            <person name="Brown J.Y."/>
            <person name="Brown A.J."/>
            <person name="Buckley D."/>
            <person name="Burton J."/>
            <person name="Bye J."/>
            <person name="Carder C."/>
            <person name="Chapman J.C."/>
            <person name="Clark S.Y."/>
            <person name="Clarke G."/>
            <person name="Clee C."/>
            <person name="Cobley V."/>
            <person name="Collier R.E."/>
            <person name="Corby N."/>
            <person name="Coville G.J."/>
            <person name="Davies J."/>
            <person name="Deadman R."/>
            <person name="Dunn M."/>
            <person name="Earthrowl M."/>
            <person name="Ellington A.G."/>
            <person name="Errington H."/>
            <person name="Frankish A."/>
            <person name="Frankland J."/>
            <person name="French L."/>
            <person name="Garner P."/>
            <person name="Garnett J."/>
            <person name="Gay L."/>
            <person name="Ghori M.R.J."/>
            <person name="Gibson R."/>
            <person name="Gilby L.M."/>
            <person name="Gillett W."/>
            <person name="Glithero R.J."/>
            <person name="Grafham D.V."/>
            <person name="Griffiths C."/>
            <person name="Griffiths-Jones S."/>
            <person name="Grocock R."/>
            <person name="Hammond S."/>
            <person name="Harrison E.S.I."/>
            <person name="Hart E."/>
            <person name="Haugen E."/>
            <person name="Heath P.D."/>
            <person name="Holmes S."/>
            <person name="Holt K."/>
            <person name="Howden P.J."/>
            <person name="Hunt A.R."/>
            <person name="Hunt S.E."/>
            <person name="Hunter G."/>
            <person name="Isherwood J."/>
            <person name="James R."/>
            <person name="Johnson C."/>
            <person name="Johnson D."/>
            <person name="Joy A."/>
            <person name="Kay M."/>
            <person name="Kershaw J.K."/>
            <person name="Kibukawa M."/>
            <person name="Kimberley A.M."/>
            <person name="King A."/>
            <person name="Knights A.J."/>
            <person name="Lad H."/>
            <person name="Laird G."/>
            <person name="Lawlor S."/>
            <person name="Leongamornlert D.A."/>
            <person name="Lloyd D.M."/>
            <person name="Loveland J."/>
            <person name="Lovell J."/>
            <person name="Lush M.J."/>
            <person name="Lyne R."/>
            <person name="Martin S."/>
            <person name="Mashreghi-Mohammadi M."/>
            <person name="Matthews L."/>
            <person name="Matthews N.S.W."/>
            <person name="McLaren S."/>
            <person name="Milne S."/>
            <person name="Mistry S."/>
            <person name="Moore M.J.F."/>
            <person name="Nickerson T."/>
            <person name="O'Dell C.N."/>
            <person name="Oliver K."/>
            <person name="Palmeiri A."/>
            <person name="Palmer S.A."/>
            <person name="Parker A."/>
            <person name="Patel D."/>
            <person name="Pearce A.V."/>
            <person name="Peck A.I."/>
            <person name="Pelan S."/>
            <person name="Phelps K."/>
            <person name="Phillimore B.J."/>
            <person name="Plumb R."/>
            <person name="Rajan J."/>
            <person name="Raymond C."/>
            <person name="Rouse G."/>
            <person name="Saenphimmachak C."/>
            <person name="Sehra H.K."/>
            <person name="Sheridan E."/>
            <person name="Shownkeen R."/>
            <person name="Sims S."/>
            <person name="Skuce C.D."/>
            <person name="Smith M."/>
            <person name="Steward C."/>
            <person name="Subramanian S."/>
            <person name="Sycamore N."/>
            <person name="Tracey A."/>
            <person name="Tromans A."/>
            <person name="Van Helmond Z."/>
            <person name="Wall M."/>
            <person name="Wallis J.M."/>
            <person name="White S."/>
            <person name="Whitehead S.L."/>
            <person name="Wilkinson J.E."/>
            <person name="Willey D.L."/>
            <person name="Williams H."/>
            <person name="Wilming L."/>
            <person name="Wray P.W."/>
            <person name="Wu Z."/>
            <person name="Coulson A."/>
            <person name="Vaudin M."/>
            <person name="Sulston J.E."/>
            <person name="Durbin R.M."/>
            <person name="Hubbard T."/>
            <person name="Wooster R."/>
            <person name="Dunham I."/>
            <person name="Carter N.P."/>
            <person name="McVean G."/>
            <person name="Ross M.T."/>
            <person name="Harrow J."/>
            <person name="Olson M.V."/>
            <person name="Beck S."/>
            <person name="Rogers J."/>
            <person name="Bentley D.R."/>
        </authorList>
    </citation>
    <scope>NUCLEOTIDE SEQUENCE [LARGE SCALE GENOMIC DNA]</scope>
    <scope>VARIANT ALA-885</scope>
</reference>
<reference key="5">
    <citation type="journal article" date="2004" name="Genome Res.">
        <title>The status, quality, and expansion of the NIH full-length cDNA project: the Mammalian Gene Collection (MGC).</title>
        <authorList>
            <consortium name="The MGC Project Team"/>
        </authorList>
    </citation>
    <scope>NUCLEOTIDE SEQUENCE [LARGE SCALE MRNA] (ISOFORM 3)</scope>
    <scope>NUCLEOTIDE SEQUENCE [LARGE SCALE MRNA] OF 2-897 (ISOFORM 1)</scope>
    <scope>NUCLEOTIDE SEQUENCE [LARGE SCALE MRNA] OF 15-897 (ISOFORM 2)</scope>
    <scope>VARIANTS PRO-25 AND CYS-743</scope>
    <source>
        <tissue>Brain</tissue>
        <tissue>Eye</tissue>
        <tissue>Prostate</tissue>
        <tissue>Skin</tissue>
    </source>
</reference>
<reference key="6">
    <citation type="submission" date="2005-04" db="EMBL/GenBank/DDBJ databases">
        <authorList>
            <person name="Totoki Y."/>
            <person name="Toyoda A."/>
            <person name="Takeda T."/>
            <person name="Sakaki Y."/>
            <person name="Tanaka A."/>
            <person name="Yokoyama S."/>
        </authorList>
    </citation>
    <scope>NUCLEOTIDE SEQUENCE [LARGE SCALE MRNA] OF 97-798</scope>
    <source>
        <tissue>Hepatocyte</tissue>
    </source>
</reference>
<reference key="7">
    <citation type="journal article" date="2008" name="Proc. Natl. Acad. Sci. U.S.A.">
        <title>A quantitative atlas of mitotic phosphorylation.</title>
        <authorList>
            <person name="Dephoure N."/>
            <person name="Zhou C."/>
            <person name="Villen J."/>
            <person name="Beausoleil S.A."/>
            <person name="Bakalarski C.E."/>
            <person name="Elledge S.J."/>
            <person name="Gygi S.P."/>
        </authorList>
    </citation>
    <scope>PHOSPHORYLATION [LARGE SCALE ANALYSIS] AT SER-891</scope>
    <scope>IDENTIFICATION BY MASS SPECTROMETRY [LARGE SCALE ANALYSIS]</scope>
    <source>
        <tissue>Cervix carcinoma</tissue>
    </source>
</reference>
<reference key="8">
    <citation type="journal article" date="2009" name="Science">
        <title>Poly(ADP-ribose)-dependent regulation of DNA repair by the chromatin remodeling enzyme ALC1.</title>
        <authorList>
            <person name="Ahel D."/>
            <person name="Horejsi Z."/>
            <person name="Wiechens N."/>
            <person name="Polo S.E."/>
            <person name="Garcia-Wilson E."/>
            <person name="Ahel I."/>
            <person name="Flynn H."/>
            <person name="Skehel M."/>
            <person name="West S.C."/>
            <person name="Jackson S.P."/>
            <person name="Owen-Hughes T."/>
            <person name="Boulton S.J."/>
        </authorList>
    </citation>
    <scope>FUNCTION</scope>
    <scope>SUBCELLULAR LOCATION</scope>
    <scope>DOMAIN MACRO</scope>
    <scope>ADP-RIBOSE-BINDING</scope>
    <scope>INTERACTION WITH PARP1</scope>
    <scope>MUTAGENESIS OF LYS-77 AND ASP-723</scope>
</reference>
<reference key="9">
    <citation type="journal article" date="2010" name="Sci. Signal.">
        <title>Quantitative phosphoproteomics reveals widespread full phosphorylation site occupancy during mitosis.</title>
        <authorList>
            <person name="Olsen J.V."/>
            <person name="Vermeulen M."/>
            <person name="Santamaria A."/>
            <person name="Kumar C."/>
            <person name="Miller M.L."/>
            <person name="Jensen L.J."/>
            <person name="Gnad F."/>
            <person name="Cox J."/>
            <person name="Jensen T.S."/>
            <person name="Nigg E.A."/>
            <person name="Brunak S."/>
            <person name="Mann M."/>
        </authorList>
    </citation>
    <scope>PHOSPHORYLATION [LARGE SCALE ANALYSIS] AT SER-636</scope>
    <scope>IDENTIFICATION BY MASS SPECTROMETRY [LARGE SCALE ANALYSIS]</scope>
    <source>
        <tissue>Cervix carcinoma</tissue>
    </source>
</reference>
<reference key="10">
    <citation type="journal article" date="2013" name="J. Proteome Res.">
        <title>Toward a comprehensive characterization of a human cancer cell phosphoproteome.</title>
        <authorList>
            <person name="Zhou H."/>
            <person name="Di Palma S."/>
            <person name="Preisinger C."/>
            <person name="Peng M."/>
            <person name="Polat A.N."/>
            <person name="Heck A.J."/>
            <person name="Mohammed S."/>
        </authorList>
    </citation>
    <scope>PHOSPHORYLATION [LARGE SCALE ANALYSIS] AT SER-607; SER-618; SER-628 AND SER-636</scope>
    <scope>IDENTIFICATION BY MASS SPECTROMETRY [LARGE SCALE ANALYSIS]</scope>
    <source>
        <tissue>Cervix carcinoma</tissue>
        <tissue>Erythroleukemia</tissue>
    </source>
</reference>
<reference key="11">
    <citation type="journal article" date="2014" name="J. Proteomics">
        <title>An enzyme assisted RP-RPLC approach for in-depth analysis of human liver phosphoproteome.</title>
        <authorList>
            <person name="Bian Y."/>
            <person name="Song C."/>
            <person name="Cheng K."/>
            <person name="Dong M."/>
            <person name="Wang F."/>
            <person name="Huang J."/>
            <person name="Sun D."/>
            <person name="Wang L."/>
            <person name="Ye M."/>
            <person name="Zou H."/>
        </authorList>
    </citation>
    <scope>PHOSPHORYLATION [LARGE SCALE ANALYSIS] AT SER-540</scope>
    <scope>IDENTIFICATION BY MASS SPECTROMETRY [LARGE SCALE ANALYSIS]</scope>
    <source>
        <tissue>Liver</tissue>
    </source>
</reference>
<reference key="12">
    <citation type="journal article" date="2014" name="Mol. Cell. Proteomics">
        <title>Immunoaffinity enrichment and mass spectrometry analysis of protein methylation.</title>
        <authorList>
            <person name="Guo A."/>
            <person name="Gu H."/>
            <person name="Zhou J."/>
            <person name="Mulhern D."/>
            <person name="Wang Y."/>
            <person name="Lee K.A."/>
            <person name="Yang V."/>
            <person name="Aguiar M."/>
            <person name="Kornhauser J."/>
            <person name="Jia X."/>
            <person name="Ren J."/>
            <person name="Beausoleil S.A."/>
            <person name="Silva J.C."/>
            <person name="Vemulapalli V."/>
            <person name="Bedford M.T."/>
            <person name="Comb M.J."/>
        </authorList>
    </citation>
    <scope>METHYLATION [LARGE SCALE ANALYSIS] AT ARG-9</scope>
    <scope>IDENTIFICATION BY MASS SPECTROMETRY [LARGE SCALE ANALYSIS]</scope>
    <source>
        <tissue>Colon carcinoma</tissue>
    </source>
</reference>
<reference key="13">
    <citation type="journal article" date="2011" name="BMC Syst. Biol.">
        <title>Initial characterization of the human central proteome.</title>
        <authorList>
            <person name="Burkard T.R."/>
            <person name="Planyavsky M."/>
            <person name="Kaupe I."/>
            <person name="Breitwieser F.P."/>
            <person name="Buerckstuemmer T."/>
            <person name="Bennett K.L."/>
            <person name="Superti-Furga G."/>
            <person name="Colinge J."/>
        </authorList>
    </citation>
    <scope>IDENTIFICATION BY MASS SPECTROMETRY [LARGE SCALE ANALYSIS]</scope>
</reference>
<reference key="14">
    <citation type="journal article" date="2013" name="Cell Metab.">
        <title>Human CIA2A-FAM96A and CIA2B-FAM96B integrate iron homeostasis and maturation of different subsets of cytosolic-nuclear iron-sulfur proteins.</title>
        <authorList>
            <person name="Stehling O."/>
            <person name="Mascarenhas J."/>
            <person name="Vashisht A.A."/>
            <person name="Sheftel A.D."/>
            <person name="Niggemeyer B."/>
            <person name="Roesser R."/>
            <person name="Pierik A.J."/>
            <person name="Wohlschlegel J.A."/>
            <person name="Lill R."/>
        </authorList>
    </citation>
    <scope>INTERACTION WITH CIAO1</scope>
</reference>
<reference key="15">
    <citation type="journal article" date="2018" name="Cell Metab.">
        <title>Human CIA2A-FAM96A and CIA2B-FAM96B Integrate Iron Homeostasis and Maturation of Different Subsets of Cytosolic-Nuclear Iron-Sulfur Proteins.</title>
        <authorList>
            <person name="Stehling O."/>
            <person name="Mascarenhas J."/>
            <person name="Vashisht A.A."/>
            <person name="Sheftel A.D."/>
            <person name="Niggemeyer B."/>
            <person name="Roesser R."/>
            <person name="Pierik A.J."/>
            <person name="Wohlschlegel J.A."/>
            <person name="Lill R."/>
        </authorList>
    </citation>
    <scope>ERRATUM OF PUBMED:23891004</scope>
</reference>
<reference key="16">
    <citation type="journal article" date="2017" name="Mol. Cell">
        <title>Mechanistic insights into autoinhibition of the oncogenic chromatin remodeler ALC1.</title>
        <authorList>
            <person name="Lehmann L.C."/>
            <person name="Hewitt G."/>
            <person name="Aibara S."/>
            <person name="Leitner A."/>
            <person name="Marklund E."/>
            <person name="Maslen S.L."/>
            <person name="Maturi V."/>
            <person name="Chen Y."/>
            <person name="van der Spoel D."/>
            <person name="Skehel J.M."/>
            <person name="Moustakas A."/>
            <person name="Boulton S.J."/>
            <person name="Deindl S."/>
        </authorList>
    </citation>
    <scope>FUNCTION</scope>
    <scope>CATALYTIC ACTIVITY</scope>
    <scope>ACTIVITY REGULATION</scope>
    <scope>DOMAIN MACRO</scope>
    <scope>ADP-RIBOSE-BINDING</scope>
    <scope>VARIANTS GLN-857 AND TRP-860</scope>
    <scope>CHARACTERIZATION OF VARIANTS GLN-857 AND TRP-860</scope>
    <scope>MUTAGENESIS OF ARG-857</scope>
</reference>
<reference key="17">
    <citation type="journal article" date="2017" name="Mol. Cell">
        <title>A Poly-ADP-Ribose trigger releases the auto-inhibition of a chromatin remodeling oncogene.</title>
        <authorList>
            <person name="Singh H.R."/>
            <person name="Nardozza A.P."/>
            <person name="Moeller I.R."/>
            <person name="Knobloch G."/>
            <person name="Kistemaker H.A.V."/>
            <person name="Hassler M."/>
            <person name="Harrer N."/>
            <person name="Blessing C."/>
            <person name="Eustermann S."/>
            <person name="Kotthoff C."/>
            <person name="Huet S."/>
            <person name="Mueller-Planitz F."/>
            <person name="Filippov D.V."/>
            <person name="Timinszky G."/>
            <person name="Rand K.D."/>
            <person name="Ladurner A.G."/>
        </authorList>
    </citation>
    <scope>FUNCTION</scope>
    <scope>CATALYTIC ACTIVITY</scope>
    <scope>INTERACTION WITH PARP1</scope>
    <scope>DOMAIN MACRO</scope>
    <scope>ADP-RIBOSE-BINDING</scope>
    <scope>MUTAGENESIS OF GLU-175; 307-LYS-LYS-308; 319-ARG-LYS-320; 332-GLU--GLU-337; ARG-398; LYS-407; SER-420; ARG-422; 653-LYS--ARG-656; GLY-750 AND ARG-842</scope>
    <scope>VARIANTS HIS-842; GLN-857 AND TRP-860</scope>
    <scope>CHARACTERIZATION OF VARIANTS HIS-842; GLN-857 AND TRP-860</scope>
</reference>
<reference key="18">
    <citation type="journal article" date="2020" name="Mol. Cell">
        <title>The oncogenic helicase ALC1 regulates PARP inhibitor potency by trapping PARP2 at DNA breaks.</title>
        <authorList>
            <person name="Blessing C."/>
            <person name="Mandemaker I.K."/>
            <person name="Gonzalez-Leal C."/>
            <person name="Preisser J."/>
            <person name="Schomburg A."/>
            <person name="Ladurner A.G."/>
        </authorList>
    </citation>
    <scope>FUNCTION</scope>
    <scope>MUTAGENESIS OF GLU-175</scope>
</reference>
<reference key="19">
    <citation type="journal article" date="2021" name="Elife">
        <title>Serine ADP-ribosylation marks nucleosomes for ALC1-dependent chromatin remodeling.</title>
        <authorList>
            <person name="Mohapatra J."/>
            <person name="Tashiro K."/>
            <person name="Beckner R.L."/>
            <person name="Sierra J."/>
            <person name="Kilgore J.A."/>
            <person name="Williams N.S."/>
            <person name="Liszczak G."/>
        </authorList>
    </citation>
    <scope>FUNCTION</scope>
    <scope>ACTIVITY REGULATION</scope>
    <scope>DOMAIN</scope>
</reference>
<reference key="20">
    <citation type="journal article" date="2021" name="Proc. Natl. Acad. Sci. U.S.A.">
        <title>Multiple roles for PARP1 in ALC1-dependent nucleosome remodeling.</title>
        <authorList>
            <person name="Ooi S.K."/>
            <person name="Sato S."/>
            <person name="Tomomori-Sato C."/>
            <person name="Zhang Y."/>
            <person name="Wen Z."/>
            <person name="Banks C.A.S."/>
            <person name="Washburn M.P."/>
            <person name="Unruh J.R."/>
            <person name="Florens L."/>
            <person name="Conaway R.C."/>
            <person name="Conaway J.W."/>
        </authorList>
    </citation>
    <scope>FUNCTION</scope>
</reference>
<reference evidence="26 27" key="21">
    <citation type="journal article" date="2020" name="Cell Rep.">
        <title>Mechanistic insights into regulation of the ALC1 remodeler by the nucleosome acidic patch.</title>
        <authorList>
            <person name="Lehmann L.C."/>
            <person name="Bacic L."/>
            <person name="Hewitt G."/>
            <person name="Brackmann K."/>
            <person name="Sabantsev A."/>
            <person name="Gaullier G."/>
            <person name="Pytharopoulou S."/>
            <person name="Degliesposti G."/>
            <person name="Okkenhaug H."/>
            <person name="Tan S."/>
            <person name="Costa A."/>
            <person name="Skehel J.M."/>
            <person name="Boulton S.J."/>
            <person name="Deindl S."/>
        </authorList>
    </citation>
    <scope>STRUCTURE BY ELECTRON MICROSCOPY (2.50 ANGSTROMS) OF 604-639 IN COMPLEX WITH NUCLEOSOME CORE COMPLEX</scope>
    <scope>FUNCTION</scope>
    <scope>ACTIVITY REGULATION</scope>
    <scope>INTERACTION WITH NUCLEOSOMES</scope>
    <scope>MUTAGENESIS OF 611-ARG-SER-612</scope>
</reference>
<reference evidence="28 29" key="22">
    <citation type="journal article" date="2021" name="Nat. Commun.">
        <title>Structural basis of ALC1/CHD1L autoinhibition and the mechanism of activation by the nucleosome.</title>
        <authorList>
            <person name="Wang L."/>
            <person name="Chen K."/>
            <person name="Chen Z."/>
        </authorList>
    </citation>
    <scope>STRUCTURE BY ELECTRON MICROSCOPY (2.80 ANGSTROMS) IN COMPLEX WITH NUCLEOSOME CORE COMPLEX</scope>
    <scope>FUNCTION</scope>
    <scope>INTERACTION WITH NUCLEOSOMES</scope>
    <scope>MUTAGENESIS OF ASP-381; ARG-457; ARG-611 AND ARG-614</scope>
    <scope>VARIANT CYS-852</scope>
    <scope>CHARACTERIZATION OF VARIANT CYS-852</scope>
</reference>
<reference evidence="30" key="23">
    <citation type="journal article" date="2021" name="Elife">
        <title>Structure and dynamics of the chromatin remodeler ALC1 bound to a PARylated nucleosome.</title>
        <authorList>
            <person name="Bacic L."/>
            <person name="Gaullier G."/>
            <person name="Sabantsev A."/>
            <person name="Lehmann L.C."/>
            <person name="Brackmann K."/>
            <person name="Dimakou D."/>
            <person name="Halic M."/>
            <person name="Hewitt G."/>
            <person name="Boulton S.J."/>
            <person name="Deindl S."/>
        </authorList>
    </citation>
    <scope>STRUCTURE BY ELECTRON MICROSCOPY (4.80 ANGSTROMS) OF 16-879 IN COMPLEX WITH NUCLEOSOME CORE COMPLEX</scope>
    <scope>FUNCTION</scope>
    <scope>ACTIVITY REGULATION</scope>
    <scope>INTERACTION WITH NUCLEOSOMES</scope>
    <scope>DOMAIN</scope>
    <scope>MUTAGENESIS OF 611-ARG-SER-612</scope>
</reference>
<name>CHD1L_HUMAN</name>